<accession>P38115</accession>
<accession>D6VQE4</accession>
<dbReference type="EC" id="1.1.1.117"/>
<dbReference type="EMBL" id="M95580">
    <property type="protein sequence ID" value="AAA35037.1"/>
    <property type="molecule type" value="Genomic_DNA"/>
</dbReference>
<dbReference type="EMBL" id="Z36018">
    <property type="protein sequence ID" value="CAA85107.1"/>
    <property type="molecule type" value="Genomic_DNA"/>
</dbReference>
<dbReference type="EMBL" id="BK006936">
    <property type="protein sequence ID" value="DAA07264.1"/>
    <property type="molecule type" value="Genomic_DNA"/>
</dbReference>
<dbReference type="PIR" id="S46020">
    <property type="entry name" value="S46020"/>
</dbReference>
<dbReference type="RefSeq" id="NP_009707.3">
    <property type="nucleotide sequence ID" value="NM_001178497.3"/>
</dbReference>
<dbReference type="PDB" id="4IJC">
    <property type="method" value="X-ray"/>
    <property type="resolution" value="2.10 A"/>
    <property type="chains" value="A/B=1-344"/>
</dbReference>
<dbReference type="PDB" id="4IJR">
    <property type="method" value="X-ray"/>
    <property type="resolution" value="2.00 A"/>
    <property type="chains" value="A/C=1-344"/>
</dbReference>
<dbReference type="PDBsum" id="4IJC"/>
<dbReference type="PDBsum" id="4IJR"/>
<dbReference type="SMR" id="P38115"/>
<dbReference type="BioGRID" id="32848">
    <property type="interactions" value="160"/>
</dbReference>
<dbReference type="DIP" id="DIP-4926N"/>
<dbReference type="FunCoup" id="P38115">
    <property type="interactions" value="220"/>
</dbReference>
<dbReference type="IntAct" id="P38115">
    <property type="interactions" value="84"/>
</dbReference>
<dbReference type="MINT" id="P38115"/>
<dbReference type="STRING" id="4932.YBR149W"/>
<dbReference type="iPTMnet" id="P38115"/>
<dbReference type="PaxDb" id="4932-YBR149W"/>
<dbReference type="PeptideAtlas" id="P38115"/>
<dbReference type="EnsemblFungi" id="YBR149W_mRNA">
    <property type="protein sequence ID" value="YBR149W"/>
    <property type="gene ID" value="YBR149W"/>
</dbReference>
<dbReference type="GeneID" id="852446"/>
<dbReference type="KEGG" id="sce:YBR149W"/>
<dbReference type="AGR" id="SGD:S000000353"/>
<dbReference type="SGD" id="S000000353">
    <property type="gene designation" value="ARA1"/>
</dbReference>
<dbReference type="VEuPathDB" id="FungiDB:YBR149W"/>
<dbReference type="eggNOG" id="KOG1577">
    <property type="taxonomic scope" value="Eukaryota"/>
</dbReference>
<dbReference type="HOGENOM" id="CLU_023205_0_0_1"/>
<dbReference type="InParanoid" id="P38115"/>
<dbReference type="OMA" id="TAWYYGT"/>
<dbReference type="OrthoDB" id="416253at2759"/>
<dbReference type="BioCyc" id="MetaCyc:MONOMER-20236"/>
<dbReference type="BioCyc" id="YEAST:MONOMER-20236"/>
<dbReference type="BRENDA" id="1.1.1.117">
    <property type="organism ID" value="984"/>
</dbReference>
<dbReference type="BRENDA" id="1.1.1.B35">
    <property type="organism ID" value="984"/>
</dbReference>
<dbReference type="Reactome" id="R-SCE-156590">
    <property type="pathway name" value="Glutathione conjugation"/>
</dbReference>
<dbReference type="Reactome" id="R-SCE-193144">
    <property type="pathway name" value="Estrogen biosynthesis"/>
</dbReference>
<dbReference type="Reactome" id="R-SCE-193368">
    <property type="pathway name" value="Synthesis of bile acids and bile salts via 7alpha-hydroxycholesterol"/>
</dbReference>
<dbReference type="Reactome" id="R-SCE-193775">
    <property type="pathway name" value="Synthesis of bile acids and bile salts via 24-hydroxycholesterol"/>
</dbReference>
<dbReference type="Reactome" id="R-SCE-193807">
    <property type="pathway name" value="Synthesis of bile acids and bile salts via 27-hydroxycholesterol"/>
</dbReference>
<dbReference type="Reactome" id="R-SCE-196108">
    <property type="pathway name" value="Pregnenolone biosynthesis"/>
</dbReference>
<dbReference type="Reactome" id="R-SCE-2162123">
    <property type="pathway name" value="Synthesis of Prostaglandins (PG) and Thromboxanes (TX)"/>
</dbReference>
<dbReference type="Reactome" id="R-SCE-5365859">
    <property type="pathway name" value="RA biosynthesis pathway"/>
</dbReference>
<dbReference type="Reactome" id="R-SCE-5652227">
    <property type="pathway name" value="Fructose biosynthesis"/>
</dbReference>
<dbReference type="Reactome" id="R-SCE-5661270">
    <property type="pathway name" value="Formation of xylulose-5-phosphate"/>
</dbReference>
<dbReference type="Reactome" id="R-SCE-9757110">
    <property type="pathway name" value="Prednisone ADME"/>
</dbReference>
<dbReference type="BioGRID-ORCS" id="852446">
    <property type="hits" value="5 hits in 10 CRISPR screens"/>
</dbReference>
<dbReference type="EvolutionaryTrace" id="P38115"/>
<dbReference type="PRO" id="PR:P38115"/>
<dbReference type="Proteomes" id="UP000002311">
    <property type="component" value="Chromosome II"/>
</dbReference>
<dbReference type="RNAct" id="P38115">
    <property type="molecule type" value="protein"/>
</dbReference>
<dbReference type="GO" id="GO:0005829">
    <property type="term" value="C:cytosol"/>
    <property type="evidence" value="ECO:0000314"/>
    <property type="project" value="SGD"/>
</dbReference>
<dbReference type="GO" id="GO:0004032">
    <property type="term" value="F:aldose reductase (NADPH) activity"/>
    <property type="evidence" value="ECO:0000318"/>
    <property type="project" value="GO_Central"/>
</dbReference>
<dbReference type="GO" id="GO:0047816">
    <property type="term" value="F:D-arabinose 1-dehydrogenase (NAD+) activity"/>
    <property type="evidence" value="ECO:0007669"/>
    <property type="project" value="RHEA"/>
</dbReference>
<dbReference type="GO" id="GO:0106271">
    <property type="term" value="F:D-arabinose 1-dehydrogenase (NADP+) activity"/>
    <property type="evidence" value="ECO:0007669"/>
    <property type="project" value="RHEA"/>
</dbReference>
<dbReference type="GO" id="GO:0045290">
    <property type="term" value="F:D-arabinose 1-dehydrogenase [NAD(P)+] activity"/>
    <property type="evidence" value="ECO:0000314"/>
    <property type="project" value="SGD"/>
</dbReference>
<dbReference type="GO" id="GO:0052588">
    <property type="term" value="F:diacetyl reductase ((S)-acetoin forming) (NAD+) activity"/>
    <property type="evidence" value="ECO:0000314"/>
    <property type="project" value="SGD"/>
</dbReference>
<dbReference type="GO" id="GO:0045149">
    <property type="term" value="P:acetoin metabolic process"/>
    <property type="evidence" value="ECO:0000314"/>
    <property type="project" value="SGD"/>
</dbReference>
<dbReference type="GO" id="GO:0005975">
    <property type="term" value="P:carbohydrate metabolic process"/>
    <property type="evidence" value="ECO:0000314"/>
    <property type="project" value="SGD"/>
</dbReference>
<dbReference type="CDD" id="cd19119">
    <property type="entry name" value="AKR_AKR3C1"/>
    <property type="match status" value="1"/>
</dbReference>
<dbReference type="FunFam" id="3.20.20.100:FF:000031">
    <property type="entry name" value="D-arabinose dehydrogenase heavy chain"/>
    <property type="match status" value="1"/>
</dbReference>
<dbReference type="Gene3D" id="3.20.20.100">
    <property type="entry name" value="NADP-dependent oxidoreductase domain"/>
    <property type="match status" value="1"/>
</dbReference>
<dbReference type="InterPro" id="IPR020471">
    <property type="entry name" value="AKR"/>
</dbReference>
<dbReference type="InterPro" id="IPR044491">
    <property type="entry name" value="AKR3C1"/>
</dbReference>
<dbReference type="InterPro" id="IPR018170">
    <property type="entry name" value="Aldo/ket_reductase_CS"/>
</dbReference>
<dbReference type="InterPro" id="IPR023210">
    <property type="entry name" value="NADP_OxRdtase_dom"/>
</dbReference>
<dbReference type="InterPro" id="IPR036812">
    <property type="entry name" value="NADP_OxRdtase_dom_sf"/>
</dbReference>
<dbReference type="PANTHER" id="PTHR11732">
    <property type="entry name" value="ALDO/KETO REDUCTASE"/>
    <property type="match status" value="1"/>
</dbReference>
<dbReference type="Pfam" id="PF00248">
    <property type="entry name" value="Aldo_ket_red"/>
    <property type="match status" value="1"/>
</dbReference>
<dbReference type="PIRSF" id="PIRSF000097">
    <property type="entry name" value="AKR"/>
    <property type="match status" value="1"/>
</dbReference>
<dbReference type="PRINTS" id="PR00069">
    <property type="entry name" value="ALDKETRDTASE"/>
</dbReference>
<dbReference type="SUPFAM" id="SSF51430">
    <property type="entry name" value="NAD(P)-linked oxidoreductase"/>
    <property type="match status" value="1"/>
</dbReference>
<dbReference type="PROSITE" id="PS00798">
    <property type="entry name" value="ALDOKETO_REDUCTASE_1"/>
    <property type="match status" value="1"/>
</dbReference>
<dbReference type="PROSITE" id="PS00062">
    <property type="entry name" value="ALDOKETO_REDUCTASE_2"/>
    <property type="match status" value="1"/>
</dbReference>
<dbReference type="PROSITE" id="PS00063">
    <property type="entry name" value="ALDOKETO_REDUCTASE_3"/>
    <property type="match status" value="1"/>
</dbReference>
<proteinExistence type="evidence at protein level"/>
<gene>
    <name type="primary">ARA1</name>
    <name type="ordered locus">YBR149W</name>
    <name type="ORF">YBR1127</name>
</gene>
<protein>
    <recommendedName>
        <fullName>D-arabinose dehydrogenase [NAD(P)+] heavy chain</fullName>
        <ecNumber>1.1.1.117</ecNumber>
    </recommendedName>
    <alternativeName>
        <fullName>AKR3C</fullName>
    </alternativeName>
</protein>
<name>ARA1_YEAST</name>
<keyword id="KW-0002">3D-structure</keyword>
<keyword id="KW-0963">Cytoplasm</keyword>
<keyword id="KW-0903">Direct protein sequencing</keyword>
<keyword id="KW-0520">NAD</keyword>
<keyword id="KW-0560">Oxidoreductase</keyword>
<keyword id="KW-0597">Phosphoprotein</keyword>
<keyword id="KW-1185">Reference proteome</keyword>
<sequence>MSSSVASTENIVENMLHPKTTEIYFSLNNGVRIPALGLGTANPHEKLAETKQAVKAAIKAGYRHIDTAWAYETEPFVGEAIKELLEDGSIKREDLFITTKVWPVLWDEVDRSLNESLKALGLEYVDLLLQHWPLCFEKIKDPKGISGLVKTPVDDSGKTMYAADGDYLETYKQLEKIYLDPNDHRVRAIGVSNFSIEYLERLIKECRVKPTVNQVETHPHLPQMELRKFCFMHDILLTAYSPLGSHGAPNLKIPLVKKLAEKYNVTGNDLLISYHIRQGTIVIPRSLNPVRISSSIEFASLTKDELQELNDFGEKYPVRFIDEPFAAILPEFTGNGPNLDNLKY</sequence>
<reference key="1">
    <citation type="journal article" date="1991" name="J. Mol. Biol.">
        <title>A widely distributed 'CAT' family of repetitive DNA sequences.</title>
        <authorList>
            <person name="Martinez-Soriano J.P."/>
            <person name="Wong W.M."/>
            <person name="van Ryk D.I."/>
            <person name="Nazar R.N."/>
        </authorList>
    </citation>
    <scope>NUCLEOTIDE SEQUENCE [GENOMIC DNA]</scope>
</reference>
<reference key="2">
    <citation type="journal article" date="1994" name="EMBO J.">
        <title>Complete DNA sequence of yeast chromosome II.</title>
        <authorList>
            <person name="Feldmann H."/>
            <person name="Aigle M."/>
            <person name="Aljinovic G."/>
            <person name="Andre B."/>
            <person name="Baclet M.C."/>
            <person name="Barthe C."/>
            <person name="Baur A."/>
            <person name="Becam A.-M."/>
            <person name="Biteau N."/>
            <person name="Boles E."/>
            <person name="Brandt T."/>
            <person name="Brendel M."/>
            <person name="Brueckner M."/>
            <person name="Bussereau F."/>
            <person name="Christiansen C."/>
            <person name="Contreras R."/>
            <person name="Crouzet M."/>
            <person name="Cziepluch C."/>
            <person name="Demolis N."/>
            <person name="Delaveau T."/>
            <person name="Doignon F."/>
            <person name="Domdey H."/>
            <person name="Duesterhus S."/>
            <person name="Dubois E."/>
            <person name="Dujon B."/>
            <person name="El Bakkoury M."/>
            <person name="Entian K.-D."/>
            <person name="Feuermann M."/>
            <person name="Fiers W."/>
            <person name="Fobo G.M."/>
            <person name="Fritz C."/>
            <person name="Gassenhuber J."/>
            <person name="Glansdorff N."/>
            <person name="Goffeau A."/>
            <person name="Grivell L.A."/>
            <person name="de Haan M."/>
            <person name="Hein C."/>
            <person name="Herbert C.J."/>
            <person name="Hollenberg C.P."/>
            <person name="Holmstroem K."/>
            <person name="Jacq C."/>
            <person name="Jacquet M."/>
            <person name="Jauniaux J.-C."/>
            <person name="Jonniaux J.-L."/>
            <person name="Kallesoee T."/>
            <person name="Kiesau P."/>
            <person name="Kirchrath L."/>
            <person name="Koetter P."/>
            <person name="Korol S."/>
            <person name="Liebl S."/>
            <person name="Logghe M."/>
            <person name="Lohan A.J.E."/>
            <person name="Louis E.J."/>
            <person name="Li Z.Y."/>
            <person name="Maat M.J."/>
            <person name="Mallet L."/>
            <person name="Mannhaupt G."/>
            <person name="Messenguy F."/>
            <person name="Miosga T."/>
            <person name="Molemans F."/>
            <person name="Mueller S."/>
            <person name="Nasr F."/>
            <person name="Obermaier B."/>
            <person name="Perea J."/>
            <person name="Pierard A."/>
            <person name="Piravandi E."/>
            <person name="Pohl F.M."/>
            <person name="Pohl T.M."/>
            <person name="Potier S."/>
            <person name="Proft M."/>
            <person name="Purnelle B."/>
            <person name="Ramezani Rad M."/>
            <person name="Rieger M."/>
            <person name="Rose M."/>
            <person name="Schaaff-Gerstenschlaeger I."/>
            <person name="Scherens B."/>
            <person name="Schwarzlose C."/>
            <person name="Skala J."/>
            <person name="Slonimski P.P."/>
            <person name="Smits P.H.M."/>
            <person name="Souciet J.-L."/>
            <person name="Steensma H.Y."/>
            <person name="Stucka R."/>
            <person name="Urrestarazu L.A."/>
            <person name="van der Aart Q.J.M."/>
            <person name="Van Dyck L."/>
            <person name="Vassarotti A."/>
            <person name="Vetter I."/>
            <person name="Vierendeels F."/>
            <person name="Vissers S."/>
            <person name="Wagner G."/>
            <person name="de Wergifosse P."/>
            <person name="Wolfe K.H."/>
            <person name="Zagulski M."/>
            <person name="Zimmermann F.K."/>
            <person name="Mewes H.-W."/>
            <person name="Kleine K."/>
        </authorList>
    </citation>
    <scope>NUCLEOTIDE SEQUENCE [LARGE SCALE GENOMIC DNA]</scope>
    <source>
        <strain>ATCC 204508 / S288c</strain>
    </source>
</reference>
<reference key="3">
    <citation type="journal article" date="2014" name="G3 (Bethesda)">
        <title>The reference genome sequence of Saccharomyces cerevisiae: Then and now.</title>
        <authorList>
            <person name="Engel S.R."/>
            <person name="Dietrich F.S."/>
            <person name="Fisk D.G."/>
            <person name="Binkley G."/>
            <person name="Balakrishnan R."/>
            <person name="Costanzo M.C."/>
            <person name="Dwight S.S."/>
            <person name="Hitz B.C."/>
            <person name="Karra K."/>
            <person name="Nash R.S."/>
            <person name="Weng S."/>
            <person name="Wong E.D."/>
            <person name="Lloyd P."/>
            <person name="Skrzypek M.S."/>
            <person name="Miyasato S.R."/>
            <person name="Simison M."/>
            <person name="Cherry J.M."/>
        </authorList>
    </citation>
    <scope>GENOME REANNOTATION</scope>
    <source>
        <strain>ATCC 204508 / S288c</strain>
    </source>
</reference>
<reference key="4">
    <citation type="journal article" date="1998" name="Biochim. Biophys. Acta">
        <title>D-arabinose dehydrogenase and its gene from Saccharomyces cerevisiae.</title>
        <authorList>
            <person name="Kim S.T."/>
            <person name="Huh W.K."/>
            <person name="Lee B.H."/>
            <person name="Kang S.O."/>
        </authorList>
    </citation>
    <scope>CHARACTERIZATION</scope>
    <scope>PROTEIN SEQUENCE OF 7-20</scope>
</reference>
<reference key="5">
    <citation type="journal article" date="2003" name="Nature">
        <title>Global analysis of protein expression in yeast.</title>
        <authorList>
            <person name="Ghaemmaghami S."/>
            <person name="Huh W.-K."/>
            <person name="Bower K."/>
            <person name="Howson R.W."/>
            <person name="Belle A."/>
            <person name="Dephoure N."/>
            <person name="O'Shea E.K."/>
            <person name="Weissman J.S."/>
        </authorList>
    </citation>
    <scope>LEVEL OF PROTEIN EXPRESSION [LARGE SCALE ANALYSIS]</scope>
</reference>
<reference key="6">
    <citation type="journal article" date="2007" name="J. Proteome Res.">
        <title>Large-scale phosphorylation analysis of alpha-factor-arrested Saccharomyces cerevisiae.</title>
        <authorList>
            <person name="Li X."/>
            <person name="Gerber S.A."/>
            <person name="Rudner A.D."/>
            <person name="Beausoleil S.A."/>
            <person name="Haas W."/>
            <person name="Villen J."/>
            <person name="Elias J.E."/>
            <person name="Gygi S.P."/>
        </authorList>
    </citation>
    <scope>PHOSPHORYLATION [LARGE SCALE ANALYSIS] AT THR-151</scope>
    <scope>IDENTIFICATION BY MASS SPECTROMETRY [LARGE SCALE ANALYSIS]</scope>
    <source>
        <strain>ADR376</strain>
    </source>
</reference>
<reference key="7">
    <citation type="journal article" date="2008" name="Mol. Cell. Proteomics">
        <title>A multidimensional chromatography technology for in-depth phosphoproteome analysis.</title>
        <authorList>
            <person name="Albuquerque C.P."/>
            <person name="Smolka M.B."/>
            <person name="Payne S.H."/>
            <person name="Bafna V."/>
            <person name="Eng J."/>
            <person name="Zhou H."/>
        </authorList>
    </citation>
    <scope>PHOSPHORYLATION [LARGE SCALE ANALYSIS] AT THR-151</scope>
    <scope>IDENTIFICATION BY MASS SPECTROMETRY [LARGE SCALE ANALYSIS]</scope>
</reference>
<reference key="8">
    <citation type="journal article" date="2009" name="Science">
        <title>Global analysis of Cdk1 substrate phosphorylation sites provides insights into evolution.</title>
        <authorList>
            <person name="Holt L.J."/>
            <person name="Tuch B.B."/>
            <person name="Villen J."/>
            <person name="Johnson A.D."/>
            <person name="Gygi S.P."/>
            <person name="Morgan D.O."/>
        </authorList>
    </citation>
    <scope>IDENTIFICATION BY MASS SPECTROMETRY [LARGE SCALE ANALYSIS]</scope>
</reference>
<evidence type="ECO:0000250" key="1"/>
<evidence type="ECO:0000269" key="2">
    <source>
    </source>
</evidence>
<evidence type="ECO:0000305" key="3"/>
<evidence type="ECO:0007744" key="4">
    <source>
    </source>
</evidence>
<evidence type="ECO:0007744" key="5">
    <source>
    </source>
</evidence>
<evidence type="ECO:0007829" key="6">
    <source>
        <dbReference type="PDB" id="4IJC"/>
    </source>
</evidence>
<evidence type="ECO:0007829" key="7">
    <source>
        <dbReference type="PDB" id="4IJR"/>
    </source>
</evidence>
<comment type="function">
    <text>Catalyzes the oxidation of D-arabinose, L-xylose, L-fucose and L-galactose in the presence of NADP(+).</text>
</comment>
<comment type="catalytic activity">
    <reaction>
        <text>D-arabinose + NADP(+) = D-arabinono-1,4-lactone + NADPH + H(+)</text>
        <dbReference type="Rhea" id="RHEA:21892"/>
        <dbReference type="ChEBI" id="CHEBI:15378"/>
        <dbReference type="ChEBI" id="CHEBI:16292"/>
        <dbReference type="ChEBI" id="CHEBI:46994"/>
        <dbReference type="ChEBI" id="CHEBI:57783"/>
        <dbReference type="ChEBI" id="CHEBI:58349"/>
        <dbReference type="EC" id="1.1.1.117"/>
    </reaction>
</comment>
<comment type="catalytic activity">
    <reaction>
        <text>D-arabinose + NAD(+) = D-arabinono-1,4-lactone + NADH + H(+)</text>
        <dbReference type="Rhea" id="RHEA:20457"/>
        <dbReference type="ChEBI" id="CHEBI:15378"/>
        <dbReference type="ChEBI" id="CHEBI:16292"/>
        <dbReference type="ChEBI" id="CHEBI:46994"/>
        <dbReference type="ChEBI" id="CHEBI:57540"/>
        <dbReference type="ChEBI" id="CHEBI:57945"/>
        <dbReference type="EC" id="1.1.1.117"/>
    </reaction>
</comment>
<comment type="biophysicochemical properties">
    <phDependence>
        <text>Optimum pH is 10.0.</text>
    </phDependence>
    <temperatureDependence>
        <text>Optimum temperature is about 30 degrees Celsius.</text>
    </temperatureDependence>
</comment>
<comment type="subunit">
    <text>Heterodimer of a heavy chain and a light chain.</text>
</comment>
<comment type="subcellular location">
    <subcellularLocation>
        <location>Cytoplasm</location>
    </subcellularLocation>
</comment>
<comment type="miscellaneous">
    <text evidence="2">Present with 30200 molecules/cell in log phase SD medium.</text>
</comment>
<comment type="similarity">
    <text evidence="3">Belongs to the aldo/keto reductase family.</text>
</comment>
<organism>
    <name type="scientific">Saccharomyces cerevisiae (strain ATCC 204508 / S288c)</name>
    <name type="common">Baker's yeast</name>
    <dbReference type="NCBI Taxonomy" id="559292"/>
    <lineage>
        <taxon>Eukaryota</taxon>
        <taxon>Fungi</taxon>
        <taxon>Dikarya</taxon>
        <taxon>Ascomycota</taxon>
        <taxon>Saccharomycotina</taxon>
        <taxon>Saccharomycetes</taxon>
        <taxon>Saccharomycetales</taxon>
        <taxon>Saccharomycetaceae</taxon>
        <taxon>Saccharomyces</taxon>
    </lineage>
</organism>
<feature type="chain" id="PRO_0000124610" description="D-arabinose dehydrogenase [NAD(P)+] heavy chain">
    <location>
        <begin position="1"/>
        <end position="344"/>
    </location>
</feature>
<feature type="active site" description="Proton donor" evidence="1">
    <location>
        <position position="71"/>
    </location>
</feature>
<feature type="binding site" evidence="1">
    <location>
        <position position="131"/>
    </location>
    <ligand>
        <name>substrate</name>
    </ligand>
</feature>
<feature type="binding site" evidence="1">
    <location>
        <begin position="241"/>
        <end position="295"/>
    </location>
    <ligand>
        <name>NADP(+)</name>
        <dbReference type="ChEBI" id="CHEBI:58349"/>
    </ligand>
</feature>
<feature type="site" description="Lowers pKa of active site Tyr" evidence="1">
    <location>
        <position position="100"/>
    </location>
</feature>
<feature type="modified residue" description="Phosphothreonine" evidence="4 5">
    <location>
        <position position="151"/>
    </location>
</feature>
<feature type="sequence conflict" description="In Ref. 1; AAA35037." evidence="3" ref="1">
    <original>AAIKAGY</original>
    <variation>LQSKLDN</variation>
    <location>
        <begin position="56"/>
        <end position="62"/>
    </location>
</feature>
<feature type="sequence conflict" description="In Ref. 1; AAA35037." evidence="3" ref="1">
    <original>YET</original>
    <variation>SR</variation>
    <location>
        <begin position="71"/>
        <end position="73"/>
    </location>
</feature>
<feature type="helix" evidence="7">
    <location>
        <begin position="20"/>
        <end position="22"/>
    </location>
</feature>
<feature type="strand" evidence="7">
    <location>
        <begin position="23"/>
        <end position="26"/>
    </location>
</feature>
<feature type="strand" evidence="7">
    <location>
        <begin position="32"/>
        <end position="36"/>
    </location>
</feature>
<feature type="helix" evidence="7">
    <location>
        <begin position="44"/>
        <end position="49"/>
    </location>
</feature>
<feature type="helix" evidence="7">
    <location>
        <begin position="50"/>
        <end position="59"/>
    </location>
</feature>
<feature type="strand" evidence="7">
    <location>
        <begin position="64"/>
        <end position="66"/>
    </location>
</feature>
<feature type="helix" evidence="7">
    <location>
        <begin position="69"/>
        <end position="71"/>
    </location>
</feature>
<feature type="helix" evidence="7">
    <location>
        <begin position="74"/>
        <end position="86"/>
    </location>
</feature>
<feature type="helix" evidence="7">
    <location>
        <begin position="92"/>
        <end position="94"/>
    </location>
</feature>
<feature type="strand" evidence="7">
    <location>
        <begin position="96"/>
        <end position="101"/>
    </location>
</feature>
<feature type="helix" evidence="7">
    <location>
        <begin position="103"/>
        <end position="105"/>
    </location>
</feature>
<feature type="helix" evidence="7">
    <location>
        <begin position="109"/>
        <end position="120"/>
    </location>
</feature>
<feature type="strand" evidence="7">
    <location>
        <begin position="126"/>
        <end position="130"/>
    </location>
</feature>
<feature type="helix" evidence="7">
    <location>
        <begin position="167"/>
        <end position="179"/>
    </location>
</feature>
<feature type="strand" evidence="6">
    <location>
        <begin position="185"/>
        <end position="187"/>
    </location>
</feature>
<feature type="strand" evidence="7">
    <location>
        <begin position="189"/>
        <end position="193"/>
    </location>
</feature>
<feature type="helix" evidence="7">
    <location>
        <begin position="196"/>
        <end position="205"/>
    </location>
</feature>
<feature type="strand" evidence="7">
    <location>
        <begin position="211"/>
        <end position="216"/>
    </location>
</feature>
<feature type="helix" evidence="7">
    <location>
        <begin position="224"/>
        <end position="233"/>
    </location>
</feature>
<feature type="strand" evidence="7">
    <location>
        <begin position="236"/>
        <end position="241"/>
    </location>
</feature>
<feature type="helix" evidence="7">
    <location>
        <begin position="249"/>
        <end position="252"/>
    </location>
</feature>
<feature type="helix" evidence="7">
    <location>
        <begin position="254"/>
        <end position="262"/>
    </location>
</feature>
<feature type="helix" evidence="7">
    <location>
        <begin position="267"/>
        <end position="277"/>
    </location>
</feature>
<feature type="helix" evidence="7">
    <location>
        <begin position="289"/>
        <end position="294"/>
    </location>
</feature>
<feature type="helix" evidence="7">
    <location>
        <begin position="303"/>
        <end position="315"/>
    </location>
</feature>
<feature type="helix" evidence="7">
    <location>
        <begin position="324"/>
        <end position="326"/>
    </location>
</feature>
<feature type="helix" evidence="7">
    <location>
        <begin position="339"/>
        <end position="341"/>
    </location>
</feature>